<name>PHNE_MYCS2</name>
<sequence>MTTEITRPPAPPSRPSESRKPSLPGLLHLVAIAAVLATIVSAWAIDFVPTALIDGSDNIVALLQRMIPPRLDDPARIGMLAVETLLMAVLGTTLAAIASVPLAFLAARNTTPHPAVQAVARAVITFCRAMPDLLFAVLFVRALGIGVLPGVLALALHSIGMLGKVFADAIEQTDAGPREAVRSTGVGYFRELLNAVVPQVVPSWIAMFVYRIDINLRMSVVLGFVGAGGIGFALQDALRGLIYPRALGIVCVILVIIAGMELLAIAIRRILLDPSRSNPLRDRIARFGLSGVLVGSCVAAFVLLKINPLALFTWVFPSVGIFTRMVPPNFDALGVDLFTAAAQTVAIGVVATAIGIALSIPAGILAARNVSPHPALYWPARAWILVVRAVPELILAVVFVAALGLGPIAGTCALAIGSIGFLAKLVADAVEEIDPGPMEAVRSVGGGWWKTLFAAVLPQSMPALVGSSLYLFDVNVRTSTILGIVGAGGVGYLLFESIRTLNFDVAGAIVIVIFVIVYAIERLSGWIRSRLV</sequence>
<proteinExistence type="evidence at protein level"/>
<protein>
    <recommendedName>
        <fullName>Phosphate-import permease protein PhnE</fullName>
    </recommendedName>
</protein>
<evidence type="ECO:0000250" key="1"/>
<evidence type="ECO:0000255" key="2">
    <source>
        <dbReference type="PROSITE-ProRule" id="PRU00441"/>
    </source>
</evidence>
<evidence type="ECO:0000256" key="3">
    <source>
        <dbReference type="SAM" id="MobiDB-lite"/>
    </source>
</evidence>
<evidence type="ECO:0000269" key="4">
    <source>
    </source>
</evidence>
<evidence type="ECO:0000305" key="5"/>
<gene>
    <name type="primary">phnE</name>
    <name type="ordered locus">MSMEG_0646</name>
    <name type="ordered locus">MSMEI_0630</name>
</gene>
<keyword id="KW-1003">Cell membrane</keyword>
<keyword id="KW-0472">Membrane</keyword>
<keyword id="KW-0592">Phosphate transport</keyword>
<keyword id="KW-1185">Reference proteome</keyword>
<keyword id="KW-0677">Repeat</keyword>
<keyword id="KW-0812">Transmembrane</keyword>
<keyword id="KW-1133">Transmembrane helix</keyword>
<keyword id="KW-0813">Transport</keyword>
<accession>A0QQ68</accession>
<accession>I7G248</accession>
<feature type="chain" id="PRO_0000357469" description="Phosphate-import permease protein PhnE">
    <location>
        <begin position="1"/>
        <end position="532"/>
    </location>
</feature>
<feature type="transmembrane region" description="Helical" evidence="2">
    <location>
        <begin position="23"/>
        <end position="45"/>
    </location>
</feature>
<feature type="transmembrane region" description="Helical" evidence="2">
    <location>
        <begin position="85"/>
        <end position="107"/>
    </location>
</feature>
<feature type="transmembrane region" description="Helical" evidence="2">
    <location>
        <begin position="134"/>
        <end position="156"/>
    </location>
</feature>
<feature type="transmembrane region" description="Helical" evidence="2">
    <location>
        <begin position="187"/>
        <end position="209"/>
    </location>
</feature>
<feature type="transmembrane region" description="Helical" evidence="2">
    <location>
        <begin position="216"/>
        <end position="235"/>
    </location>
</feature>
<feature type="transmembrane region" description="Helical" evidence="2">
    <location>
        <begin position="245"/>
        <end position="267"/>
    </location>
</feature>
<feature type="transmembrane region" description="Helical" evidence="2">
    <location>
        <begin position="287"/>
        <end position="304"/>
    </location>
</feature>
<feature type="transmembrane region" description="Helical" evidence="2">
    <location>
        <begin position="345"/>
        <end position="367"/>
    </location>
</feature>
<feature type="transmembrane region" description="Helical" evidence="2">
    <location>
        <begin position="395"/>
        <end position="417"/>
    </location>
</feature>
<feature type="transmembrane region" description="Helical" evidence="2">
    <location>
        <begin position="452"/>
        <end position="471"/>
    </location>
</feature>
<feature type="transmembrane region" description="Helical" evidence="2">
    <location>
        <begin position="478"/>
        <end position="495"/>
    </location>
</feature>
<feature type="transmembrane region" description="Helical" evidence="2">
    <location>
        <begin position="505"/>
        <end position="527"/>
    </location>
</feature>
<feature type="domain" description="ABC transmembrane type-1 1" evidence="2">
    <location>
        <begin position="81"/>
        <end position="264"/>
    </location>
</feature>
<feature type="domain" description="ABC transmembrane type-1 2" evidence="2">
    <location>
        <begin position="341"/>
        <end position="524"/>
    </location>
</feature>
<feature type="region of interest" description="Disordered" evidence="3">
    <location>
        <begin position="1"/>
        <end position="20"/>
    </location>
</feature>
<organism>
    <name type="scientific">Mycolicibacterium smegmatis (strain ATCC 700084 / mc(2)155)</name>
    <name type="common">Mycobacterium smegmatis</name>
    <dbReference type="NCBI Taxonomy" id="246196"/>
    <lineage>
        <taxon>Bacteria</taxon>
        <taxon>Bacillati</taxon>
        <taxon>Actinomycetota</taxon>
        <taxon>Actinomycetes</taxon>
        <taxon>Mycobacteriales</taxon>
        <taxon>Mycobacteriaceae</taxon>
        <taxon>Mycolicibacterium</taxon>
    </lineage>
</organism>
<comment type="function">
    <text evidence="4">Part of the ABC transporter complex PhnCDE involved in phosphate import. Responsible for the translocation of the substrate across the membrane.</text>
</comment>
<comment type="subunit">
    <text evidence="1">The complex is composed of two ATP-binding proteins (PhnC), two transmembrane proteins (PhnE) and a solute-binding protein (PhnD).</text>
</comment>
<comment type="subcellular location">
    <subcellularLocation>
        <location evidence="1">Cell membrane</location>
        <topology evidence="2">Multi-pass membrane protein</topology>
    </subcellularLocation>
</comment>
<comment type="induction">
    <text evidence="4">By phosphate-limited conditions, via derepression by PhnF, and probably also via the two-component regulatory system senX3/regX3.</text>
</comment>
<comment type="similarity">
    <text evidence="5">Belongs to the binding-protein-dependent transport system permease family.</text>
</comment>
<reference key="1">
    <citation type="submission" date="2006-10" db="EMBL/GenBank/DDBJ databases">
        <authorList>
            <person name="Fleischmann R.D."/>
            <person name="Dodson R.J."/>
            <person name="Haft D.H."/>
            <person name="Merkel J.S."/>
            <person name="Nelson W.C."/>
            <person name="Fraser C.M."/>
        </authorList>
    </citation>
    <scope>NUCLEOTIDE SEQUENCE [LARGE SCALE GENOMIC DNA]</scope>
    <source>
        <strain>ATCC 700084 / mc(2)155</strain>
    </source>
</reference>
<reference key="2">
    <citation type="journal article" date="2007" name="Genome Biol.">
        <title>Interrupted coding sequences in Mycobacterium smegmatis: authentic mutations or sequencing errors?</title>
        <authorList>
            <person name="Deshayes C."/>
            <person name="Perrodou E."/>
            <person name="Gallien S."/>
            <person name="Euphrasie D."/>
            <person name="Schaeffer C."/>
            <person name="Van-Dorsselaer A."/>
            <person name="Poch O."/>
            <person name="Lecompte O."/>
            <person name="Reyrat J.-M."/>
        </authorList>
    </citation>
    <scope>NUCLEOTIDE SEQUENCE [LARGE SCALE GENOMIC DNA]</scope>
    <source>
        <strain>ATCC 700084 / mc(2)155</strain>
    </source>
</reference>
<reference key="3">
    <citation type="journal article" date="2009" name="Genome Res.">
        <title>Ortho-proteogenomics: multiple proteomes investigation through orthology and a new MS-based protocol.</title>
        <authorList>
            <person name="Gallien S."/>
            <person name="Perrodou E."/>
            <person name="Carapito C."/>
            <person name="Deshayes C."/>
            <person name="Reyrat J.-M."/>
            <person name="Van Dorsselaer A."/>
            <person name="Poch O."/>
            <person name="Schaeffer C."/>
            <person name="Lecompte O."/>
        </authorList>
    </citation>
    <scope>NUCLEOTIDE SEQUENCE [LARGE SCALE GENOMIC DNA]</scope>
    <source>
        <strain>ATCC 700084 / mc(2)155</strain>
    </source>
</reference>
<reference key="4">
    <citation type="journal article" date="2005" name="Microbiology">
        <title>Mutants of Mycobacterium smegmatis unable to grow at acidic pH in the presence of the protonophore carbonyl cyanide m-chlorophenylhydrazone.</title>
        <authorList>
            <person name="Tran S.L."/>
            <person name="Rao M."/>
            <person name="Simmers C."/>
            <person name="Gebhard S."/>
            <person name="Olsson K."/>
            <person name="Cook G.M."/>
        </authorList>
    </citation>
    <scope>INVOLVEMENT IN PHOSPHATE ASSIMILATION</scope>
    <scope>GENE NAME</scope>
</reference>
<reference key="5">
    <citation type="journal article" date="2006" name="Microbiology">
        <title>The Phn system of Mycobacterium smegmatis: a second high-affinity ABC-transporter for phosphate.</title>
        <authorList>
            <person name="Gebhard S."/>
            <person name="Tran S.L."/>
            <person name="Cook G.M."/>
        </authorList>
    </citation>
    <scope>FUNCTION IN PHOSPHATE TRANSPORT</scope>
    <scope>INDUCTION</scope>
</reference>
<dbReference type="EMBL" id="CP000480">
    <property type="protein sequence ID" value="ABK75678.1"/>
    <property type="molecule type" value="Genomic_DNA"/>
</dbReference>
<dbReference type="EMBL" id="CP001663">
    <property type="protein sequence ID" value="AFP37111.1"/>
    <property type="molecule type" value="Genomic_DNA"/>
</dbReference>
<dbReference type="RefSeq" id="WP_011727091.1">
    <property type="nucleotide sequence ID" value="NZ_SIJM01000009.1"/>
</dbReference>
<dbReference type="RefSeq" id="YP_885056.1">
    <property type="nucleotide sequence ID" value="NC_008596.1"/>
</dbReference>
<dbReference type="SMR" id="A0QQ68"/>
<dbReference type="STRING" id="246196.MSMEG_0646"/>
<dbReference type="TCDB" id="3.A.1.9.2">
    <property type="family name" value="the atp-binding cassette (abc) superfamily"/>
</dbReference>
<dbReference type="PaxDb" id="246196-MSMEI_0630"/>
<dbReference type="GeneID" id="93455559"/>
<dbReference type="KEGG" id="msb:LJ00_03210"/>
<dbReference type="KEGG" id="msg:MSMEI_0630"/>
<dbReference type="KEGG" id="msm:MSMEG_0646"/>
<dbReference type="PATRIC" id="fig|246196.19.peg.642"/>
<dbReference type="eggNOG" id="COG3639">
    <property type="taxonomic scope" value="Bacteria"/>
</dbReference>
<dbReference type="OrthoDB" id="9808005at2"/>
<dbReference type="Proteomes" id="UP000000757">
    <property type="component" value="Chromosome"/>
</dbReference>
<dbReference type="Proteomes" id="UP000006158">
    <property type="component" value="Chromosome"/>
</dbReference>
<dbReference type="GO" id="GO:0005886">
    <property type="term" value="C:plasma membrane"/>
    <property type="evidence" value="ECO:0007669"/>
    <property type="project" value="UniProtKB-SubCell"/>
</dbReference>
<dbReference type="GO" id="GO:0015416">
    <property type="term" value="F:ABC-type phosphonate transporter activity"/>
    <property type="evidence" value="ECO:0007669"/>
    <property type="project" value="InterPro"/>
</dbReference>
<dbReference type="GO" id="GO:0006817">
    <property type="term" value="P:phosphate ion transport"/>
    <property type="evidence" value="ECO:0007669"/>
    <property type="project" value="UniProtKB-KW"/>
</dbReference>
<dbReference type="CDD" id="cd06261">
    <property type="entry name" value="TM_PBP2"/>
    <property type="match status" value="2"/>
</dbReference>
<dbReference type="Gene3D" id="1.10.3720.10">
    <property type="entry name" value="MetI-like"/>
    <property type="match status" value="2"/>
</dbReference>
<dbReference type="InterPro" id="IPR000515">
    <property type="entry name" value="MetI-like"/>
</dbReference>
<dbReference type="InterPro" id="IPR035906">
    <property type="entry name" value="MetI-like_sf"/>
</dbReference>
<dbReference type="InterPro" id="IPR005769">
    <property type="entry name" value="PhnE/PtxC"/>
</dbReference>
<dbReference type="NCBIfam" id="TIGR01097">
    <property type="entry name" value="PhnE"/>
    <property type="match status" value="2"/>
</dbReference>
<dbReference type="PANTHER" id="PTHR30043:SF1">
    <property type="entry name" value="ABC TRANSPORT SYSTEM PERMEASE PROTEIN P69"/>
    <property type="match status" value="1"/>
</dbReference>
<dbReference type="PANTHER" id="PTHR30043">
    <property type="entry name" value="PHOSPHONATES TRANSPORT SYSTEM PERMEASE PROTEIN"/>
    <property type="match status" value="1"/>
</dbReference>
<dbReference type="Pfam" id="PF00528">
    <property type="entry name" value="BPD_transp_1"/>
    <property type="match status" value="2"/>
</dbReference>
<dbReference type="SUPFAM" id="SSF161098">
    <property type="entry name" value="MetI-like"/>
    <property type="match status" value="2"/>
</dbReference>
<dbReference type="PROSITE" id="PS50928">
    <property type="entry name" value="ABC_TM1"/>
    <property type="match status" value="2"/>
</dbReference>